<comment type="function">
    <text evidence="3">Involved in the biosynthesis of spiroketal steroid and saponin natural products from cholesterol such as diosgenin and analogs (e.g. furostanol and spirostanol), plant defense compounds used as main precursors for the industrial production of steroid hormones (PubMed:31324795). During the 5,6-spiroketalization of cholesterol, catalyzes the hydroxylation of cholesterol to form 16S,22S-dihydroxycholesterol and, possibly, the subsequent conversion of 16S,22S-dihydroxycholesterol into 16-oxo-22-hydroxy-cholesterol and 16-hydroxy-22-oxo-cholesterol (PubMed:31324795). 16-hydroxy-22-oxo-cholesterol submit a spontaneous reaction leading to the production of furostanol-type steroid diastereomers, precursors of diosgenin (PubMed:31324795).</text>
</comment>
<comment type="catalytic activity">
    <reaction evidence="3">
        <text>cholesterol + 2 reduced [NADPH--hemoprotein reductase] + 2 O2 = (16S,22S)-dihydroxycholesterol + 2 oxidized [NADPH--hemoprotein reductase] + 2 H2O + 2 H(+)</text>
        <dbReference type="Rhea" id="RHEA:72191"/>
        <dbReference type="Rhea" id="RHEA-COMP:11964"/>
        <dbReference type="Rhea" id="RHEA-COMP:11965"/>
        <dbReference type="ChEBI" id="CHEBI:15377"/>
        <dbReference type="ChEBI" id="CHEBI:15378"/>
        <dbReference type="ChEBI" id="CHEBI:15379"/>
        <dbReference type="ChEBI" id="CHEBI:16113"/>
        <dbReference type="ChEBI" id="CHEBI:57618"/>
        <dbReference type="ChEBI" id="CHEBI:58210"/>
        <dbReference type="ChEBI" id="CHEBI:191938"/>
    </reaction>
    <physiologicalReaction direction="left-to-right" evidence="3">
        <dbReference type="Rhea" id="RHEA:72192"/>
    </physiologicalReaction>
</comment>
<comment type="pathway">
    <text evidence="3">Steroid metabolism; cholesterol metabolism.</text>
</comment>
<comment type="subcellular location">
    <subcellularLocation>
        <location evidence="2">Membrane</location>
        <topology evidence="2">Single-pass membrane protein</topology>
    </subcellularLocation>
</comment>
<comment type="tissue specificity">
    <text evidence="3">Mainly expressed in leaves and, at low levels, in roots and stems.</text>
</comment>
<comment type="biotechnology">
    <text evidence="3">The coexpression of CYP90G4 and CYP94D108 in the yeast strain RH6829, which was engineered to accumulate cholesterol, leads to the production of diosgenin, the main precursor for the industrial production of steroid hormones.</text>
</comment>
<comment type="similarity">
    <text evidence="7">Belongs to the cytochrome P450 family.</text>
</comment>
<feature type="chain" id="PRO_5021938306" description="Cholesterol 16,22-dihydroxylase CYP90G4">
    <location>
        <begin position="1"/>
        <end position="485"/>
    </location>
</feature>
<feature type="transmembrane region" description="Helical" evidence="2">
    <location>
        <begin position="4"/>
        <end position="24"/>
    </location>
</feature>
<feature type="binding site" description="axial binding residue" evidence="1">
    <location>
        <position position="432"/>
    </location>
    <ligand>
        <name>heme</name>
        <dbReference type="ChEBI" id="CHEBI:30413"/>
    </ligand>
    <ligandPart>
        <name>Fe</name>
        <dbReference type="ChEBI" id="CHEBI:18248"/>
    </ligandPart>
</feature>
<feature type="sequence conflict" description="In Ref. 2; ATN45453." evidence="7" ref="2">
    <original>K</original>
    <variation>E</variation>
    <location>
        <position position="258"/>
    </location>
</feature>
<organism>
    <name type="scientific">Paris polyphylla</name>
    <name type="common">Daiswa polyphylla</name>
    <dbReference type="NCBI Taxonomy" id="49666"/>
    <lineage>
        <taxon>Eukaryota</taxon>
        <taxon>Viridiplantae</taxon>
        <taxon>Streptophyta</taxon>
        <taxon>Embryophyta</taxon>
        <taxon>Tracheophyta</taxon>
        <taxon>Spermatophyta</taxon>
        <taxon>Magnoliopsida</taxon>
        <taxon>Liliopsida</taxon>
        <taxon>Liliales</taxon>
        <taxon>Melanthiaceae</taxon>
        <taxon>Paris</taxon>
    </lineage>
</organism>
<name>C90G4_PARPY</name>
<evidence type="ECO:0000250" key="1">
    <source>
        <dbReference type="UniProtKB" id="P04798"/>
    </source>
</evidence>
<evidence type="ECO:0000255" key="2"/>
<evidence type="ECO:0000269" key="3">
    <source>
    </source>
</evidence>
<evidence type="ECO:0000269" key="4">
    <source ref="2"/>
</evidence>
<evidence type="ECO:0000303" key="5">
    <source>
    </source>
</evidence>
<evidence type="ECO:0000303" key="6">
    <source ref="2"/>
</evidence>
<evidence type="ECO:0000305" key="7"/>
<keyword id="KW-0153">Cholesterol metabolism</keyword>
<keyword id="KW-0349">Heme</keyword>
<keyword id="KW-0408">Iron</keyword>
<keyword id="KW-0444">Lipid biosynthesis</keyword>
<keyword id="KW-0443">Lipid metabolism</keyword>
<keyword id="KW-0472">Membrane</keyword>
<keyword id="KW-0479">Metal-binding</keyword>
<keyword id="KW-0503">Monooxygenase</keyword>
<keyword id="KW-0560">Oxidoreductase</keyword>
<keyword id="KW-0752">Steroid biosynthesis</keyword>
<keyword id="KW-0753">Steroid metabolism</keyword>
<keyword id="KW-1207">Sterol metabolism</keyword>
<keyword id="KW-0812">Transmembrane</keyword>
<keyword id="KW-1133">Transmembrane helix</keyword>
<accession>A0A517FNC5</accession>
<accession>A0A5H2HD22</accession>
<sequence length="485" mass="54979">MAPVVILFFLFPTLLVLVVAVLGLRGGDDSWKKRGLKVPPGSMGWPLLGETIAFRRLHPCTSLGEYMEEHVNKYGKIYRSNLFGAPTIVSADAELNRFVLMNDERLFEPCFPKSVADILGHTSMLVLTGEMHRYMKSLSVNFMGIARLRNNFLGDSELYITQNFNRWKENIPFPAKEEACKVTFNLMVKNILSLNPGEPESEHLRKLYMSFMKGVVAIPLNLPGTAYKKAIQSRATILKMIEKLMEERIRNKKAGTDKIGEADLLGFILEQSNLDAEQFGDLLLGLLFGGHETSATAITLVIYFLYDCPKAVDHLREEHLGIVRAKKARGEPPALTWDDYKQMEFSQCVVSETLRLGNIIKFVHRKAKTDVQFKGYDIPKGWSVIPVFAAAHLDPSVYENPQKFDPWRWQTISTGTARIDNYMPFGQGLRNCAGLELAKMEIVVFLHHLTLNFDWEMAEPDHPLAYAFPDFPKGLPIKVRRLALK</sequence>
<dbReference type="EC" id="1.14.14.-" evidence="3 4"/>
<dbReference type="EMBL" id="MK636702">
    <property type="protein sequence ID" value="QDS03628.1"/>
    <property type="molecule type" value="mRNA"/>
</dbReference>
<dbReference type="EMBL" id="KX904821">
    <property type="protein sequence ID" value="ATN45453.1"/>
    <property type="molecule type" value="mRNA"/>
</dbReference>
<dbReference type="SMR" id="A0A517FNC5"/>
<dbReference type="UniPathway" id="UPA00296"/>
<dbReference type="GO" id="GO:0016020">
    <property type="term" value="C:membrane"/>
    <property type="evidence" value="ECO:0007669"/>
    <property type="project" value="UniProtKB-SubCell"/>
</dbReference>
<dbReference type="GO" id="GO:0020037">
    <property type="term" value="F:heme binding"/>
    <property type="evidence" value="ECO:0007669"/>
    <property type="project" value="InterPro"/>
</dbReference>
<dbReference type="GO" id="GO:0005506">
    <property type="term" value="F:iron ion binding"/>
    <property type="evidence" value="ECO:0007669"/>
    <property type="project" value="InterPro"/>
</dbReference>
<dbReference type="GO" id="GO:0004497">
    <property type="term" value="F:monooxygenase activity"/>
    <property type="evidence" value="ECO:0007669"/>
    <property type="project" value="UniProtKB-KW"/>
</dbReference>
<dbReference type="GO" id="GO:0016705">
    <property type="term" value="F:oxidoreductase activity, acting on paired donors, with incorporation or reduction of molecular oxygen"/>
    <property type="evidence" value="ECO:0000314"/>
    <property type="project" value="UniProtKB"/>
</dbReference>
<dbReference type="GO" id="GO:0016132">
    <property type="term" value="P:brassinosteroid biosynthetic process"/>
    <property type="evidence" value="ECO:0007669"/>
    <property type="project" value="TreeGrafter"/>
</dbReference>
<dbReference type="GO" id="GO:0010268">
    <property type="term" value="P:brassinosteroid homeostasis"/>
    <property type="evidence" value="ECO:0007669"/>
    <property type="project" value="TreeGrafter"/>
</dbReference>
<dbReference type="GO" id="GO:0008203">
    <property type="term" value="P:cholesterol metabolic process"/>
    <property type="evidence" value="ECO:0000314"/>
    <property type="project" value="UniProtKB"/>
</dbReference>
<dbReference type="GO" id="GO:0016135">
    <property type="term" value="P:saponin biosynthetic process"/>
    <property type="evidence" value="ECO:0000314"/>
    <property type="project" value="UniProtKB"/>
</dbReference>
<dbReference type="GO" id="GO:0006694">
    <property type="term" value="P:steroid biosynthetic process"/>
    <property type="evidence" value="ECO:0000314"/>
    <property type="project" value="UniProtKB"/>
</dbReference>
<dbReference type="CDD" id="cd11043">
    <property type="entry name" value="CYP90-like"/>
    <property type="match status" value="1"/>
</dbReference>
<dbReference type="Gene3D" id="1.10.630.10">
    <property type="entry name" value="Cytochrome P450"/>
    <property type="match status" value="1"/>
</dbReference>
<dbReference type="InterPro" id="IPR001128">
    <property type="entry name" value="Cyt_P450"/>
</dbReference>
<dbReference type="InterPro" id="IPR017972">
    <property type="entry name" value="Cyt_P450_CS"/>
</dbReference>
<dbReference type="InterPro" id="IPR002401">
    <property type="entry name" value="Cyt_P450_E_grp-I"/>
</dbReference>
<dbReference type="InterPro" id="IPR036396">
    <property type="entry name" value="Cyt_P450_sf"/>
</dbReference>
<dbReference type="PANTHER" id="PTHR24286">
    <property type="entry name" value="CYTOCHROME P450 26"/>
    <property type="match status" value="1"/>
</dbReference>
<dbReference type="PANTHER" id="PTHR24286:SF194">
    <property type="entry name" value="STEROID (22S)-HYDROXYLASE"/>
    <property type="match status" value="1"/>
</dbReference>
<dbReference type="Pfam" id="PF00067">
    <property type="entry name" value="p450"/>
    <property type="match status" value="1"/>
</dbReference>
<dbReference type="PRINTS" id="PR00463">
    <property type="entry name" value="EP450I"/>
</dbReference>
<dbReference type="PRINTS" id="PR00385">
    <property type="entry name" value="P450"/>
</dbReference>
<dbReference type="SUPFAM" id="SSF48264">
    <property type="entry name" value="Cytochrome P450"/>
    <property type="match status" value="1"/>
</dbReference>
<dbReference type="PROSITE" id="PS00086">
    <property type="entry name" value="CYTOCHROME_P450"/>
    <property type="match status" value="1"/>
</dbReference>
<proteinExistence type="evidence at protein level"/>
<gene>
    <name evidence="5" type="primary">CYP90G4</name>
    <name evidence="6" type="synonym">DWF4</name>
</gene>
<reference key="1">
    <citation type="journal article" date="2019" name="Nat. Commun.">
        <title>Repeated evolution of cytochrome P450-mediated spiroketal steroid biosynthesis in plants.</title>
        <authorList>
            <person name="Christ B."/>
            <person name="Xu C."/>
            <person name="Xu M."/>
            <person name="Li F.-S."/>
            <person name="Wada N."/>
            <person name="Mitchell A.J."/>
            <person name="Han X.-L."/>
            <person name="Wen M.-L."/>
            <person name="Fujita M."/>
            <person name="Weng J.-K."/>
        </authorList>
    </citation>
    <scope>NUCLEOTIDE SEQUENCE [MRNA]</scope>
    <scope>FUNCTION</scope>
    <scope>CATALYTIC ACTIVITY</scope>
    <scope>PATHWAY</scope>
    <scope>BIOTECHNOLOGY</scope>
    <scope>TISSUE SPECIFICITY</scope>
    <source>
        <tissue>Fruit</tissue>
        <tissue>Leaf</tissue>
        <tissue>Root</tissue>
        <tissue>Stem</tissue>
    </source>
</reference>
<reference key="2">
    <citation type="submission" date="2016-09" db="EMBL/GenBank/DDBJ databases">
        <title>Cloning and Functional Analysis of PpDWF4, an ortholog of Arabidopsis DWF4 from Paris polyphylla var. yunnensis.</title>
        <authorList>
            <person name="Yin Y."/>
            <person name="Zhang X.-N."/>
        </authorList>
    </citation>
    <scope>NUCLEOTIDE SEQUENCE [MRNA]</scope>
</reference>
<protein>
    <recommendedName>
        <fullName evidence="5">Cholesterol 16,22-dihydroxylase CYP90G4</fullName>
        <ecNumber evidence="3">1.14.14.-</ecNumber>
    </recommendedName>
    <alternativeName>
        <fullName evidence="5">Cytochrome P450 CYP90G4</fullName>
        <shortName evidence="5">PpCYP90G4</shortName>
    </alternativeName>
    <alternativeName>
        <fullName evidence="7">Protein DWARF 4 homolog</fullName>
        <shortName evidence="6">PpDWF4</shortName>
    </alternativeName>
    <alternativeName>
        <fullName evidence="6">Steroid 22-alpha-hydroxylase CYP90G4</fullName>
        <ecNumber evidence="4">1.14.14.-</ecNumber>
    </alternativeName>
</protein>